<gene>
    <name evidence="1" type="primary">argG</name>
    <name type="ordered locus">BARBAKC583_1361</name>
</gene>
<organism>
    <name type="scientific">Bartonella bacilliformis (strain ATCC 35685 / KC583 / Herrer 020/F12,63)</name>
    <dbReference type="NCBI Taxonomy" id="360095"/>
    <lineage>
        <taxon>Bacteria</taxon>
        <taxon>Pseudomonadati</taxon>
        <taxon>Pseudomonadota</taxon>
        <taxon>Alphaproteobacteria</taxon>
        <taxon>Hyphomicrobiales</taxon>
        <taxon>Bartonellaceae</taxon>
        <taxon>Bartonella</taxon>
    </lineage>
</organism>
<protein>
    <recommendedName>
        <fullName evidence="1">Argininosuccinate synthase</fullName>
        <ecNumber evidence="1">6.3.4.5</ecNumber>
    </recommendedName>
    <alternativeName>
        <fullName evidence="1">Citrulline--aspartate ligase</fullName>
    </alternativeName>
</protein>
<feature type="chain" id="PRO_1000000383" description="Argininosuccinate synthase">
    <location>
        <begin position="1"/>
        <end position="407"/>
    </location>
</feature>
<feature type="binding site" evidence="1">
    <location>
        <begin position="13"/>
        <end position="21"/>
    </location>
    <ligand>
        <name>ATP</name>
        <dbReference type="ChEBI" id="CHEBI:30616"/>
    </ligand>
</feature>
<feature type="binding site" evidence="1">
    <location>
        <position position="40"/>
    </location>
    <ligand>
        <name>ATP</name>
        <dbReference type="ChEBI" id="CHEBI:30616"/>
    </ligand>
</feature>
<feature type="binding site" evidence="1">
    <location>
        <position position="91"/>
    </location>
    <ligand>
        <name>L-citrulline</name>
        <dbReference type="ChEBI" id="CHEBI:57743"/>
    </ligand>
</feature>
<feature type="binding site" evidence="1">
    <location>
        <position position="96"/>
    </location>
    <ligand>
        <name>L-citrulline</name>
        <dbReference type="ChEBI" id="CHEBI:57743"/>
    </ligand>
</feature>
<feature type="binding site" evidence="1">
    <location>
        <position position="121"/>
    </location>
    <ligand>
        <name>ATP</name>
        <dbReference type="ChEBI" id="CHEBI:30616"/>
    </ligand>
</feature>
<feature type="binding site" evidence="1">
    <location>
        <position position="123"/>
    </location>
    <ligand>
        <name>L-aspartate</name>
        <dbReference type="ChEBI" id="CHEBI:29991"/>
    </ligand>
</feature>
<feature type="binding site" evidence="1">
    <location>
        <position position="127"/>
    </location>
    <ligand>
        <name>L-aspartate</name>
        <dbReference type="ChEBI" id="CHEBI:29991"/>
    </ligand>
</feature>
<feature type="binding site" evidence="1">
    <location>
        <position position="127"/>
    </location>
    <ligand>
        <name>L-citrulline</name>
        <dbReference type="ChEBI" id="CHEBI:57743"/>
    </ligand>
</feature>
<feature type="binding site" evidence="1">
    <location>
        <position position="128"/>
    </location>
    <ligand>
        <name>L-aspartate</name>
        <dbReference type="ChEBI" id="CHEBI:29991"/>
    </ligand>
</feature>
<feature type="binding site" evidence="1">
    <location>
        <position position="131"/>
    </location>
    <ligand>
        <name>L-citrulline</name>
        <dbReference type="ChEBI" id="CHEBI:57743"/>
    </ligand>
</feature>
<feature type="binding site" evidence="1">
    <location>
        <position position="182"/>
    </location>
    <ligand>
        <name>L-citrulline</name>
        <dbReference type="ChEBI" id="CHEBI:57743"/>
    </ligand>
</feature>
<feature type="binding site" evidence="1">
    <location>
        <position position="191"/>
    </location>
    <ligand>
        <name>L-citrulline</name>
        <dbReference type="ChEBI" id="CHEBI:57743"/>
    </ligand>
</feature>
<feature type="binding site" evidence="1">
    <location>
        <position position="267"/>
    </location>
    <ligand>
        <name>L-citrulline</name>
        <dbReference type="ChEBI" id="CHEBI:57743"/>
    </ligand>
</feature>
<feature type="binding site" evidence="1">
    <location>
        <position position="279"/>
    </location>
    <ligand>
        <name>L-citrulline</name>
        <dbReference type="ChEBI" id="CHEBI:57743"/>
    </ligand>
</feature>
<accession>A1UUF5</accession>
<sequence length="407" mass="45389">MNKWTDVKKVVLAYSGGLDTSIILKWLQSELGAEVVTFTADLGQGEELESARRKAEIMGIKEIYIEDLREEFVRDFVFPMFRANAVYEGVYLLGTSIARPLISKRLIEIAKETGADAIAHGATGKGNDQVRFELSAYALDPDIKIIAPWRDWTFKSRTDLIEFARVHQIPVEKDKEGEAPFSVDANLLHSSSEGKILENPAIPAPEYVHMRTLSPETAPDKATIITIGFKKGDAVSINGEMLSPATLLAQLNNYGRDNGIGRLDLVENRFVGMKSRGIYETPGGTILLTAHRAIESLTLDRGAAHLKDELMPRYAELIYYGFWFSPERKMLQAAIDLSQEHVEGEVTLKLYKGNVIVEGRQSKKSLYFDKLVTFEDDQGAYDQKDAAGFIKLNALRLRTLAARSSVL</sequence>
<evidence type="ECO:0000255" key="1">
    <source>
        <dbReference type="HAMAP-Rule" id="MF_00005"/>
    </source>
</evidence>
<keyword id="KW-0028">Amino-acid biosynthesis</keyword>
<keyword id="KW-0055">Arginine biosynthesis</keyword>
<keyword id="KW-0067">ATP-binding</keyword>
<keyword id="KW-0963">Cytoplasm</keyword>
<keyword id="KW-0436">Ligase</keyword>
<keyword id="KW-0547">Nucleotide-binding</keyword>
<comment type="catalytic activity">
    <reaction evidence="1">
        <text>L-citrulline + L-aspartate + ATP = 2-(N(omega)-L-arginino)succinate + AMP + diphosphate + H(+)</text>
        <dbReference type="Rhea" id="RHEA:10932"/>
        <dbReference type="ChEBI" id="CHEBI:15378"/>
        <dbReference type="ChEBI" id="CHEBI:29991"/>
        <dbReference type="ChEBI" id="CHEBI:30616"/>
        <dbReference type="ChEBI" id="CHEBI:33019"/>
        <dbReference type="ChEBI" id="CHEBI:57472"/>
        <dbReference type="ChEBI" id="CHEBI:57743"/>
        <dbReference type="ChEBI" id="CHEBI:456215"/>
        <dbReference type="EC" id="6.3.4.5"/>
    </reaction>
</comment>
<comment type="pathway">
    <text evidence="1">Amino-acid biosynthesis; L-arginine biosynthesis; L-arginine from L-ornithine and carbamoyl phosphate: step 2/3.</text>
</comment>
<comment type="subunit">
    <text evidence="1">Homotetramer.</text>
</comment>
<comment type="subcellular location">
    <subcellularLocation>
        <location evidence="1">Cytoplasm</location>
    </subcellularLocation>
</comment>
<comment type="similarity">
    <text evidence="1">Belongs to the argininosuccinate synthase family. Type 1 subfamily.</text>
</comment>
<name>ASSY_BARBK</name>
<proteinExistence type="inferred from homology"/>
<reference key="1">
    <citation type="submission" date="2006-12" db="EMBL/GenBank/DDBJ databases">
        <authorList>
            <person name="Hendrix L."/>
            <person name="Mohamoud Y."/>
            <person name="Radune D."/>
            <person name="Shvartsbeyn A."/>
            <person name="Daugherty S."/>
            <person name="Dodson R."/>
            <person name="Durkin A.S."/>
            <person name="Harkins D."/>
            <person name="Huot H."/>
            <person name="Kothari S.P."/>
            <person name="Madupu R."/>
            <person name="Li J."/>
            <person name="Nelson W.C."/>
            <person name="Shrivastava S."/>
            <person name="Giglio M.G."/>
            <person name="Haft D."/>
            <person name="Selengut J."/>
            <person name="Fraser-Ligget C."/>
            <person name="Seshadri R."/>
        </authorList>
    </citation>
    <scope>NUCLEOTIDE SEQUENCE [LARGE SCALE GENOMIC DNA]</scope>
    <source>
        <strain>ATCC 35685 / KC583 / Herrer 020/F12,63</strain>
    </source>
</reference>
<dbReference type="EC" id="6.3.4.5" evidence="1"/>
<dbReference type="EMBL" id="CP000524">
    <property type="protein sequence ID" value="ABM45481.1"/>
    <property type="molecule type" value="Genomic_DNA"/>
</dbReference>
<dbReference type="RefSeq" id="WP_005768174.1">
    <property type="nucleotide sequence ID" value="NC_008783.1"/>
</dbReference>
<dbReference type="SMR" id="A1UUF5"/>
<dbReference type="STRING" id="360095.BARBAKC583_1361"/>
<dbReference type="GeneID" id="4684191"/>
<dbReference type="KEGG" id="bbk:BARBAKC583_1361"/>
<dbReference type="PATRIC" id="fig|360095.6.peg.1334"/>
<dbReference type="eggNOG" id="COG0137">
    <property type="taxonomic scope" value="Bacteria"/>
</dbReference>
<dbReference type="HOGENOM" id="CLU_032784_4_2_5"/>
<dbReference type="OrthoDB" id="9801641at2"/>
<dbReference type="UniPathway" id="UPA00068">
    <property type="reaction ID" value="UER00113"/>
</dbReference>
<dbReference type="Proteomes" id="UP000000643">
    <property type="component" value="Chromosome"/>
</dbReference>
<dbReference type="GO" id="GO:0005737">
    <property type="term" value="C:cytoplasm"/>
    <property type="evidence" value="ECO:0007669"/>
    <property type="project" value="UniProtKB-SubCell"/>
</dbReference>
<dbReference type="GO" id="GO:0004055">
    <property type="term" value="F:argininosuccinate synthase activity"/>
    <property type="evidence" value="ECO:0007669"/>
    <property type="project" value="UniProtKB-UniRule"/>
</dbReference>
<dbReference type="GO" id="GO:0005524">
    <property type="term" value="F:ATP binding"/>
    <property type="evidence" value="ECO:0007669"/>
    <property type="project" value="UniProtKB-UniRule"/>
</dbReference>
<dbReference type="GO" id="GO:0000053">
    <property type="term" value="P:argininosuccinate metabolic process"/>
    <property type="evidence" value="ECO:0007669"/>
    <property type="project" value="TreeGrafter"/>
</dbReference>
<dbReference type="GO" id="GO:0006526">
    <property type="term" value="P:L-arginine biosynthetic process"/>
    <property type="evidence" value="ECO:0007669"/>
    <property type="project" value="UniProtKB-UniRule"/>
</dbReference>
<dbReference type="GO" id="GO:0000050">
    <property type="term" value="P:urea cycle"/>
    <property type="evidence" value="ECO:0007669"/>
    <property type="project" value="TreeGrafter"/>
</dbReference>
<dbReference type="CDD" id="cd01999">
    <property type="entry name" value="ASS"/>
    <property type="match status" value="1"/>
</dbReference>
<dbReference type="FunFam" id="3.40.50.620:FF:000019">
    <property type="entry name" value="Argininosuccinate synthase"/>
    <property type="match status" value="1"/>
</dbReference>
<dbReference type="FunFam" id="3.90.1260.10:FF:000007">
    <property type="entry name" value="Argininosuccinate synthase"/>
    <property type="match status" value="1"/>
</dbReference>
<dbReference type="Gene3D" id="3.90.1260.10">
    <property type="entry name" value="Argininosuccinate synthetase, chain A, domain 2"/>
    <property type="match status" value="1"/>
</dbReference>
<dbReference type="Gene3D" id="3.40.50.620">
    <property type="entry name" value="HUPs"/>
    <property type="match status" value="1"/>
</dbReference>
<dbReference type="Gene3D" id="1.20.5.470">
    <property type="entry name" value="Single helix bin"/>
    <property type="match status" value="1"/>
</dbReference>
<dbReference type="HAMAP" id="MF_00005">
    <property type="entry name" value="Arg_succ_synth_type1"/>
    <property type="match status" value="1"/>
</dbReference>
<dbReference type="InterPro" id="IPR048268">
    <property type="entry name" value="Arginosuc_syn_C"/>
</dbReference>
<dbReference type="InterPro" id="IPR048267">
    <property type="entry name" value="Arginosuc_syn_N"/>
</dbReference>
<dbReference type="InterPro" id="IPR001518">
    <property type="entry name" value="Arginosuc_synth"/>
</dbReference>
<dbReference type="InterPro" id="IPR018223">
    <property type="entry name" value="Arginosuc_synth_CS"/>
</dbReference>
<dbReference type="InterPro" id="IPR023434">
    <property type="entry name" value="Arginosuc_synth_type_1_subfam"/>
</dbReference>
<dbReference type="InterPro" id="IPR024074">
    <property type="entry name" value="AS_cat/multimer_dom_body"/>
</dbReference>
<dbReference type="InterPro" id="IPR014729">
    <property type="entry name" value="Rossmann-like_a/b/a_fold"/>
</dbReference>
<dbReference type="NCBIfam" id="TIGR00032">
    <property type="entry name" value="argG"/>
    <property type="match status" value="1"/>
</dbReference>
<dbReference type="NCBIfam" id="NF001770">
    <property type="entry name" value="PRK00509.1"/>
    <property type="match status" value="1"/>
</dbReference>
<dbReference type="PANTHER" id="PTHR11587">
    <property type="entry name" value="ARGININOSUCCINATE SYNTHASE"/>
    <property type="match status" value="1"/>
</dbReference>
<dbReference type="PANTHER" id="PTHR11587:SF2">
    <property type="entry name" value="ARGININOSUCCINATE SYNTHASE"/>
    <property type="match status" value="1"/>
</dbReference>
<dbReference type="Pfam" id="PF20979">
    <property type="entry name" value="Arginosuc_syn_C"/>
    <property type="match status" value="1"/>
</dbReference>
<dbReference type="Pfam" id="PF00764">
    <property type="entry name" value="Arginosuc_synth"/>
    <property type="match status" value="1"/>
</dbReference>
<dbReference type="SUPFAM" id="SSF52402">
    <property type="entry name" value="Adenine nucleotide alpha hydrolases-like"/>
    <property type="match status" value="1"/>
</dbReference>
<dbReference type="SUPFAM" id="SSF69864">
    <property type="entry name" value="Argininosuccinate synthetase, C-terminal domain"/>
    <property type="match status" value="1"/>
</dbReference>
<dbReference type="PROSITE" id="PS00564">
    <property type="entry name" value="ARGININOSUCCIN_SYN_1"/>
    <property type="match status" value="1"/>
</dbReference>
<dbReference type="PROSITE" id="PS00565">
    <property type="entry name" value="ARGININOSUCCIN_SYN_2"/>
    <property type="match status" value="1"/>
</dbReference>